<gene>
    <name evidence="1" type="primary">eno</name>
    <name type="ordered locus">SeD_A3266</name>
</gene>
<dbReference type="EC" id="4.2.1.11" evidence="1"/>
<dbReference type="EMBL" id="CP001144">
    <property type="protein sequence ID" value="ACH73820.1"/>
    <property type="molecule type" value="Genomic_DNA"/>
</dbReference>
<dbReference type="RefSeq" id="WP_000036735.1">
    <property type="nucleotide sequence ID" value="NC_011205.1"/>
</dbReference>
<dbReference type="SMR" id="B5FTU9"/>
<dbReference type="KEGG" id="sed:SeD_A3266"/>
<dbReference type="HOGENOM" id="CLU_031223_2_1_6"/>
<dbReference type="UniPathway" id="UPA00109">
    <property type="reaction ID" value="UER00187"/>
</dbReference>
<dbReference type="Proteomes" id="UP000008322">
    <property type="component" value="Chromosome"/>
</dbReference>
<dbReference type="GO" id="GO:0009986">
    <property type="term" value="C:cell surface"/>
    <property type="evidence" value="ECO:0007669"/>
    <property type="project" value="UniProtKB-SubCell"/>
</dbReference>
<dbReference type="GO" id="GO:0005576">
    <property type="term" value="C:extracellular region"/>
    <property type="evidence" value="ECO:0007669"/>
    <property type="project" value="UniProtKB-SubCell"/>
</dbReference>
<dbReference type="GO" id="GO:0000015">
    <property type="term" value="C:phosphopyruvate hydratase complex"/>
    <property type="evidence" value="ECO:0007669"/>
    <property type="project" value="InterPro"/>
</dbReference>
<dbReference type="GO" id="GO:0000287">
    <property type="term" value="F:magnesium ion binding"/>
    <property type="evidence" value="ECO:0007669"/>
    <property type="project" value="UniProtKB-UniRule"/>
</dbReference>
<dbReference type="GO" id="GO:0004634">
    <property type="term" value="F:phosphopyruvate hydratase activity"/>
    <property type="evidence" value="ECO:0007669"/>
    <property type="project" value="UniProtKB-UniRule"/>
</dbReference>
<dbReference type="GO" id="GO:0006096">
    <property type="term" value="P:glycolytic process"/>
    <property type="evidence" value="ECO:0007669"/>
    <property type="project" value="UniProtKB-UniRule"/>
</dbReference>
<dbReference type="CDD" id="cd03313">
    <property type="entry name" value="enolase"/>
    <property type="match status" value="1"/>
</dbReference>
<dbReference type="FunFam" id="3.20.20.120:FF:000001">
    <property type="entry name" value="Enolase"/>
    <property type="match status" value="1"/>
</dbReference>
<dbReference type="FunFam" id="3.30.390.10:FF:000001">
    <property type="entry name" value="Enolase"/>
    <property type="match status" value="1"/>
</dbReference>
<dbReference type="Gene3D" id="3.20.20.120">
    <property type="entry name" value="Enolase-like C-terminal domain"/>
    <property type="match status" value="1"/>
</dbReference>
<dbReference type="Gene3D" id="3.30.390.10">
    <property type="entry name" value="Enolase-like, N-terminal domain"/>
    <property type="match status" value="1"/>
</dbReference>
<dbReference type="HAMAP" id="MF_00318">
    <property type="entry name" value="Enolase"/>
    <property type="match status" value="1"/>
</dbReference>
<dbReference type="InterPro" id="IPR000941">
    <property type="entry name" value="Enolase"/>
</dbReference>
<dbReference type="InterPro" id="IPR036849">
    <property type="entry name" value="Enolase-like_C_sf"/>
</dbReference>
<dbReference type="InterPro" id="IPR029017">
    <property type="entry name" value="Enolase-like_N"/>
</dbReference>
<dbReference type="InterPro" id="IPR020810">
    <property type="entry name" value="Enolase_C"/>
</dbReference>
<dbReference type="InterPro" id="IPR020809">
    <property type="entry name" value="Enolase_CS"/>
</dbReference>
<dbReference type="InterPro" id="IPR020811">
    <property type="entry name" value="Enolase_N"/>
</dbReference>
<dbReference type="NCBIfam" id="TIGR01060">
    <property type="entry name" value="eno"/>
    <property type="match status" value="1"/>
</dbReference>
<dbReference type="PANTHER" id="PTHR11902">
    <property type="entry name" value="ENOLASE"/>
    <property type="match status" value="1"/>
</dbReference>
<dbReference type="PANTHER" id="PTHR11902:SF1">
    <property type="entry name" value="ENOLASE"/>
    <property type="match status" value="1"/>
</dbReference>
<dbReference type="Pfam" id="PF00113">
    <property type="entry name" value="Enolase_C"/>
    <property type="match status" value="1"/>
</dbReference>
<dbReference type="Pfam" id="PF03952">
    <property type="entry name" value="Enolase_N"/>
    <property type="match status" value="1"/>
</dbReference>
<dbReference type="PIRSF" id="PIRSF001400">
    <property type="entry name" value="Enolase"/>
    <property type="match status" value="1"/>
</dbReference>
<dbReference type="PRINTS" id="PR00148">
    <property type="entry name" value="ENOLASE"/>
</dbReference>
<dbReference type="SFLD" id="SFLDS00001">
    <property type="entry name" value="Enolase"/>
    <property type="match status" value="1"/>
</dbReference>
<dbReference type="SFLD" id="SFLDF00002">
    <property type="entry name" value="enolase"/>
    <property type="match status" value="1"/>
</dbReference>
<dbReference type="SMART" id="SM01192">
    <property type="entry name" value="Enolase_C"/>
    <property type="match status" value="1"/>
</dbReference>
<dbReference type="SMART" id="SM01193">
    <property type="entry name" value="Enolase_N"/>
    <property type="match status" value="1"/>
</dbReference>
<dbReference type="SUPFAM" id="SSF51604">
    <property type="entry name" value="Enolase C-terminal domain-like"/>
    <property type="match status" value="1"/>
</dbReference>
<dbReference type="SUPFAM" id="SSF54826">
    <property type="entry name" value="Enolase N-terminal domain-like"/>
    <property type="match status" value="1"/>
</dbReference>
<dbReference type="PROSITE" id="PS00164">
    <property type="entry name" value="ENOLASE"/>
    <property type="match status" value="1"/>
</dbReference>
<evidence type="ECO:0000255" key="1">
    <source>
        <dbReference type="HAMAP-Rule" id="MF_00318"/>
    </source>
</evidence>
<protein>
    <recommendedName>
        <fullName evidence="1">Enolase</fullName>
        <ecNumber evidence="1">4.2.1.11</ecNumber>
    </recommendedName>
    <alternativeName>
        <fullName evidence="1">2-phospho-D-glycerate hydro-lyase</fullName>
    </alternativeName>
    <alternativeName>
        <fullName evidence="1">2-phosphoglycerate dehydratase</fullName>
    </alternativeName>
</protein>
<sequence length="432" mass="45598">MSKIVKVIGREIIDSRGNPTVEAEVHLEGGFVGMAAAPSGASTGSREALELRDGDKSRFLGKGVTKAVGAVNGPIAQAILGKDAKDQAGIDKIMIDLDGTENKSNFGANAILAVSLANAKAAAAAKGMPLYEHIAELNGTPGKYSMPVPMMNIINGGEHADNNVDIQEFMIQPVGAKTVKEAIRMGSEVFHHLAKVLKGKGMNTAVGDEGGYAPNLGSNAEALAVIAEAVKAAGYELGKNITLAMDCAASEFYKDGKYVLAGEGNKAFTSEEFTHFLEELTKQYPIVSIEDGLDESDWDGFAYQTKVLGDKIQLVGDDLFVTNTKILKEGIEKGIANSILIKFNQIGSLTETLAAIKMAKDAGYTAVISHRSGETEDATIADLAVGTAAGQIKTGSMSRSDRVAKYNQLIRIEEALGEKAPYNGRKEIKGQA</sequence>
<keyword id="KW-0963">Cytoplasm</keyword>
<keyword id="KW-0324">Glycolysis</keyword>
<keyword id="KW-0456">Lyase</keyword>
<keyword id="KW-0460">Magnesium</keyword>
<keyword id="KW-0479">Metal-binding</keyword>
<keyword id="KW-0964">Secreted</keyword>
<reference key="1">
    <citation type="journal article" date="2011" name="J. Bacteriol.">
        <title>Comparative genomics of 28 Salmonella enterica isolates: evidence for CRISPR-mediated adaptive sublineage evolution.</title>
        <authorList>
            <person name="Fricke W.F."/>
            <person name="Mammel M.K."/>
            <person name="McDermott P.F."/>
            <person name="Tartera C."/>
            <person name="White D.G."/>
            <person name="Leclerc J.E."/>
            <person name="Ravel J."/>
            <person name="Cebula T.A."/>
        </authorList>
    </citation>
    <scope>NUCLEOTIDE SEQUENCE [LARGE SCALE GENOMIC DNA]</scope>
    <source>
        <strain>CT_02021853</strain>
    </source>
</reference>
<proteinExistence type="inferred from homology"/>
<feature type="chain" id="PRO_1000115907" description="Enolase">
    <location>
        <begin position="1"/>
        <end position="432"/>
    </location>
</feature>
<feature type="active site" description="Proton donor" evidence="1">
    <location>
        <position position="209"/>
    </location>
</feature>
<feature type="active site" description="Proton acceptor" evidence="1">
    <location>
        <position position="342"/>
    </location>
</feature>
<feature type="binding site" evidence="1">
    <location>
        <position position="167"/>
    </location>
    <ligand>
        <name>(2R)-2-phosphoglycerate</name>
        <dbReference type="ChEBI" id="CHEBI:58289"/>
    </ligand>
</feature>
<feature type="binding site" evidence="1">
    <location>
        <position position="246"/>
    </location>
    <ligand>
        <name>Mg(2+)</name>
        <dbReference type="ChEBI" id="CHEBI:18420"/>
    </ligand>
</feature>
<feature type="binding site" evidence="1">
    <location>
        <position position="290"/>
    </location>
    <ligand>
        <name>Mg(2+)</name>
        <dbReference type="ChEBI" id="CHEBI:18420"/>
    </ligand>
</feature>
<feature type="binding site" evidence="1">
    <location>
        <position position="317"/>
    </location>
    <ligand>
        <name>Mg(2+)</name>
        <dbReference type="ChEBI" id="CHEBI:18420"/>
    </ligand>
</feature>
<feature type="binding site" evidence="1">
    <location>
        <position position="342"/>
    </location>
    <ligand>
        <name>(2R)-2-phosphoglycerate</name>
        <dbReference type="ChEBI" id="CHEBI:58289"/>
    </ligand>
</feature>
<feature type="binding site" evidence="1">
    <location>
        <position position="371"/>
    </location>
    <ligand>
        <name>(2R)-2-phosphoglycerate</name>
        <dbReference type="ChEBI" id="CHEBI:58289"/>
    </ligand>
</feature>
<feature type="binding site" evidence="1">
    <location>
        <position position="372"/>
    </location>
    <ligand>
        <name>(2R)-2-phosphoglycerate</name>
        <dbReference type="ChEBI" id="CHEBI:58289"/>
    </ligand>
</feature>
<feature type="binding site" evidence="1">
    <location>
        <position position="393"/>
    </location>
    <ligand>
        <name>(2R)-2-phosphoglycerate</name>
        <dbReference type="ChEBI" id="CHEBI:58289"/>
    </ligand>
</feature>
<accession>B5FTU9</accession>
<organism>
    <name type="scientific">Salmonella dublin (strain CT_02021853)</name>
    <dbReference type="NCBI Taxonomy" id="439851"/>
    <lineage>
        <taxon>Bacteria</taxon>
        <taxon>Pseudomonadati</taxon>
        <taxon>Pseudomonadota</taxon>
        <taxon>Gammaproteobacteria</taxon>
        <taxon>Enterobacterales</taxon>
        <taxon>Enterobacteriaceae</taxon>
        <taxon>Salmonella</taxon>
    </lineage>
</organism>
<comment type="function">
    <text evidence="1">Catalyzes the reversible conversion of 2-phosphoglycerate (2-PG) into phosphoenolpyruvate (PEP). It is essential for the degradation of carbohydrates via glycolysis.</text>
</comment>
<comment type="catalytic activity">
    <reaction evidence="1">
        <text>(2R)-2-phosphoglycerate = phosphoenolpyruvate + H2O</text>
        <dbReference type="Rhea" id="RHEA:10164"/>
        <dbReference type="ChEBI" id="CHEBI:15377"/>
        <dbReference type="ChEBI" id="CHEBI:58289"/>
        <dbReference type="ChEBI" id="CHEBI:58702"/>
        <dbReference type="EC" id="4.2.1.11"/>
    </reaction>
</comment>
<comment type="cofactor">
    <cofactor evidence="1">
        <name>Mg(2+)</name>
        <dbReference type="ChEBI" id="CHEBI:18420"/>
    </cofactor>
    <text evidence="1">Binds a second Mg(2+) ion via substrate during catalysis.</text>
</comment>
<comment type="pathway">
    <text evidence="1">Carbohydrate degradation; glycolysis; pyruvate from D-glyceraldehyde 3-phosphate: step 4/5.</text>
</comment>
<comment type="subunit">
    <text evidence="1">Component of the RNA degradosome, a multiprotein complex involved in RNA processing and mRNA degradation.</text>
</comment>
<comment type="subcellular location">
    <subcellularLocation>
        <location evidence="1">Cytoplasm</location>
    </subcellularLocation>
    <subcellularLocation>
        <location evidence="1">Secreted</location>
    </subcellularLocation>
    <subcellularLocation>
        <location evidence="1">Cell surface</location>
    </subcellularLocation>
    <text evidence="1">Fractions of enolase are present in both the cytoplasm and on the cell surface.</text>
</comment>
<comment type="similarity">
    <text evidence="1">Belongs to the enolase family.</text>
</comment>
<name>ENO_SALDC</name>